<organism>
    <name type="scientific">Erythrobacter litoralis (strain HTCC2594)</name>
    <dbReference type="NCBI Taxonomy" id="314225"/>
    <lineage>
        <taxon>Bacteria</taxon>
        <taxon>Pseudomonadati</taxon>
        <taxon>Pseudomonadota</taxon>
        <taxon>Alphaproteobacteria</taxon>
        <taxon>Sphingomonadales</taxon>
        <taxon>Erythrobacteraceae</taxon>
        <taxon>Erythrobacter/Porphyrobacter group</taxon>
        <taxon>Erythrobacter</taxon>
    </lineage>
</organism>
<reference key="1">
    <citation type="journal article" date="2009" name="J. Bacteriol.">
        <title>Complete genome sequence of Erythrobacter litoralis HTCC2594.</title>
        <authorList>
            <person name="Oh H.M."/>
            <person name="Giovannoni S.J."/>
            <person name="Ferriera S."/>
            <person name="Johnson J."/>
            <person name="Cho J.C."/>
        </authorList>
    </citation>
    <scope>NUCLEOTIDE SEQUENCE [LARGE SCALE GENOMIC DNA]</scope>
    <source>
        <strain>HTCC2594</strain>
    </source>
</reference>
<proteinExistence type="inferred from homology"/>
<keyword id="KW-0963">Cytoplasm</keyword>
<keyword id="KW-0648">Protein biosynthesis</keyword>
<keyword id="KW-1185">Reference proteome</keyword>
<comment type="function">
    <text evidence="1">Responsible for the release of ribosomes from messenger RNA at the termination of protein biosynthesis. May increase the efficiency of translation by recycling ribosomes from one round of translation to another.</text>
</comment>
<comment type="subcellular location">
    <subcellularLocation>
        <location evidence="1">Cytoplasm</location>
    </subcellularLocation>
</comment>
<comment type="similarity">
    <text evidence="1">Belongs to the RRF family.</text>
</comment>
<gene>
    <name evidence="1" type="primary">frr</name>
    <name type="ordered locus">ELI_03790</name>
</gene>
<dbReference type="EMBL" id="CP000157">
    <property type="protein sequence ID" value="ABC62850.1"/>
    <property type="molecule type" value="Genomic_DNA"/>
</dbReference>
<dbReference type="RefSeq" id="WP_011413726.1">
    <property type="nucleotide sequence ID" value="NC_007722.1"/>
</dbReference>
<dbReference type="SMR" id="Q2NBU1"/>
<dbReference type="STRING" id="314225.ELI_03790"/>
<dbReference type="KEGG" id="eli:ELI_03790"/>
<dbReference type="eggNOG" id="COG0233">
    <property type="taxonomic scope" value="Bacteria"/>
</dbReference>
<dbReference type="HOGENOM" id="CLU_073981_2_0_5"/>
<dbReference type="OrthoDB" id="9804006at2"/>
<dbReference type="Proteomes" id="UP000008808">
    <property type="component" value="Chromosome"/>
</dbReference>
<dbReference type="GO" id="GO:0005829">
    <property type="term" value="C:cytosol"/>
    <property type="evidence" value="ECO:0007669"/>
    <property type="project" value="GOC"/>
</dbReference>
<dbReference type="GO" id="GO:0043023">
    <property type="term" value="F:ribosomal large subunit binding"/>
    <property type="evidence" value="ECO:0007669"/>
    <property type="project" value="TreeGrafter"/>
</dbReference>
<dbReference type="GO" id="GO:0002184">
    <property type="term" value="P:cytoplasmic translational termination"/>
    <property type="evidence" value="ECO:0007669"/>
    <property type="project" value="TreeGrafter"/>
</dbReference>
<dbReference type="CDD" id="cd00520">
    <property type="entry name" value="RRF"/>
    <property type="match status" value="1"/>
</dbReference>
<dbReference type="FunFam" id="1.10.132.20:FF:000001">
    <property type="entry name" value="Ribosome-recycling factor"/>
    <property type="match status" value="1"/>
</dbReference>
<dbReference type="FunFam" id="3.30.1360.40:FF:000001">
    <property type="entry name" value="Ribosome-recycling factor"/>
    <property type="match status" value="1"/>
</dbReference>
<dbReference type="Gene3D" id="3.30.1360.40">
    <property type="match status" value="1"/>
</dbReference>
<dbReference type="Gene3D" id="1.10.132.20">
    <property type="entry name" value="Ribosome-recycling factor"/>
    <property type="match status" value="1"/>
</dbReference>
<dbReference type="HAMAP" id="MF_00040">
    <property type="entry name" value="RRF"/>
    <property type="match status" value="1"/>
</dbReference>
<dbReference type="InterPro" id="IPR002661">
    <property type="entry name" value="Ribosome_recyc_fac"/>
</dbReference>
<dbReference type="InterPro" id="IPR023584">
    <property type="entry name" value="Ribosome_recyc_fac_dom"/>
</dbReference>
<dbReference type="InterPro" id="IPR036191">
    <property type="entry name" value="RRF_sf"/>
</dbReference>
<dbReference type="NCBIfam" id="TIGR00496">
    <property type="entry name" value="frr"/>
    <property type="match status" value="1"/>
</dbReference>
<dbReference type="PANTHER" id="PTHR20982:SF3">
    <property type="entry name" value="MITOCHONDRIAL RIBOSOME RECYCLING FACTOR PSEUDO 1"/>
    <property type="match status" value="1"/>
</dbReference>
<dbReference type="PANTHER" id="PTHR20982">
    <property type="entry name" value="RIBOSOME RECYCLING FACTOR"/>
    <property type="match status" value="1"/>
</dbReference>
<dbReference type="Pfam" id="PF01765">
    <property type="entry name" value="RRF"/>
    <property type="match status" value="1"/>
</dbReference>
<dbReference type="SUPFAM" id="SSF55194">
    <property type="entry name" value="Ribosome recycling factor, RRF"/>
    <property type="match status" value="1"/>
</dbReference>
<name>RRF_ERYLH</name>
<sequence>MAKYDKADIERRMAGAVESLKSDLSGLRTGRANTSLLDPVVVEVYGAMMPLNQVATVNAPEPRMLAVQVWDKANVSAVEKGITKANLGLNPMTDGQTVRLPMPDLTEERRKELAKLAGQYAEKAKIAIRNVRRDGMEDLKADEKAKDISEDDRKRMEDEVQKLTDKYVAEADSAAEAKEKEIMTQ</sequence>
<protein>
    <recommendedName>
        <fullName evidence="1">Ribosome-recycling factor</fullName>
        <shortName evidence="1">RRF</shortName>
    </recommendedName>
    <alternativeName>
        <fullName evidence="1">Ribosome-releasing factor</fullName>
    </alternativeName>
</protein>
<accession>Q2NBU1</accession>
<evidence type="ECO:0000255" key="1">
    <source>
        <dbReference type="HAMAP-Rule" id="MF_00040"/>
    </source>
</evidence>
<evidence type="ECO:0000256" key="2">
    <source>
        <dbReference type="SAM" id="MobiDB-lite"/>
    </source>
</evidence>
<feature type="chain" id="PRO_1000003161" description="Ribosome-recycling factor">
    <location>
        <begin position="1"/>
        <end position="185"/>
    </location>
</feature>
<feature type="region of interest" description="Disordered" evidence="2">
    <location>
        <begin position="137"/>
        <end position="159"/>
    </location>
</feature>